<accession>B7HRY9</accession>
<organism>
    <name type="scientific">Bacillus cereus (strain AH187)</name>
    <dbReference type="NCBI Taxonomy" id="405534"/>
    <lineage>
        <taxon>Bacteria</taxon>
        <taxon>Bacillati</taxon>
        <taxon>Bacillota</taxon>
        <taxon>Bacilli</taxon>
        <taxon>Bacillales</taxon>
        <taxon>Bacillaceae</taxon>
        <taxon>Bacillus</taxon>
        <taxon>Bacillus cereus group</taxon>
    </lineage>
</organism>
<dbReference type="EC" id="2.7.8.7" evidence="1"/>
<dbReference type="EMBL" id="CP001177">
    <property type="protein sequence ID" value="ACJ81272.1"/>
    <property type="molecule type" value="Genomic_DNA"/>
</dbReference>
<dbReference type="SMR" id="B7HRY9"/>
<dbReference type="KEGG" id="bcr:BCAH187_A0284"/>
<dbReference type="HOGENOM" id="CLU_089696_1_2_9"/>
<dbReference type="Proteomes" id="UP000002214">
    <property type="component" value="Chromosome"/>
</dbReference>
<dbReference type="GO" id="GO:0005829">
    <property type="term" value="C:cytosol"/>
    <property type="evidence" value="ECO:0007669"/>
    <property type="project" value="TreeGrafter"/>
</dbReference>
<dbReference type="GO" id="GO:0008897">
    <property type="term" value="F:holo-[acyl-carrier-protein] synthase activity"/>
    <property type="evidence" value="ECO:0007669"/>
    <property type="project" value="UniProtKB-UniRule"/>
</dbReference>
<dbReference type="GO" id="GO:0000287">
    <property type="term" value="F:magnesium ion binding"/>
    <property type="evidence" value="ECO:0007669"/>
    <property type="project" value="UniProtKB-UniRule"/>
</dbReference>
<dbReference type="GO" id="GO:0006633">
    <property type="term" value="P:fatty acid biosynthetic process"/>
    <property type="evidence" value="ECO:0007669"/>
    <property type="project" value="UniProtKB-UniRule"/>
</dbReference>
<dbReference type="GO" id="GO:0019878">
    <property type="term" value="P:lysine biosynthetic process via aminoadipic acid"/>
    <property type="evidence" value="ECO:0007669"/>
    <property type="project" value="TreeGrafter"/>
</dbReference>
<dbReference type="Gene3D" id="3.90.470.20">
    <property type="entry name" value="4'-phosphopantetheinyl transferase domain"/>
    <property type="match status" value="1"/>
</dbReference>
<dbReference type="HAMAP" id="MF_00101">
    <property type="entry name" value="AcpS"/>
    <property type="match status" value="1"/>
</dbReference>
<dbReference type="InterPro" id="IPR008278">
    <property type="entry name" value="4-PPantetheinyl_Trfase_dom"/>
</dbReference>
<dbReference type="InterPro" id="IPR037143">
    <property type="entry name" value="4-PPantetheinyl_Trfase_dom_sf"/>
</dbReference>
<dbReference type="InterPro" id="IPR002582">
    <property type="entry name" value="ACPS"/>
</dbReference>
<dbReference type="InterPro" id="IPR050559">
    <property type="entry name" value="P-Pant_transferase_sf"/>
</dbReference>
<dbReference type="InterPro" id="IPR004568">
    <property type="entry name" value="Ppantetheine-prot_Trfase_dom"/>
</dbReference>
<dbReference type="NCBIfam" id="TIGR00516">
    <property type="entry name" value="acpS"/>
    <property type="match status" value="1"/>
</dbReference>
<dbReference type="NCBIfam" id="TIGR00556">
    <property type="entry name" value="pantethn_trn"/>
    <property type="match status" value="1"/>
</dbReference>
<dbReference type="PANTHER" id="PTHR12215:SF10">
    <property type="entry name" value="L-AMINOADIPATE-SEMIALDEHYDE DEHYDROGENASE-PHOSPHOPANTETHEINYL TRANSFERASE"/>
    <property type="match status" value="1"/>
</dbReference>
<dbReference type="PANTHER" id="PTHR12215">
    <property type="entry name" value="PHOSPHOPANTETHEINE TRANSFERASE"/>
    <property type="match status" value="1"/>
</dbReference>
<dbReference type="Pfam" id="PF01648">
    <property type="entry name" value="ACPS"/>
    <property type="match status" value="1"/>
</dbReference>
<dbReference type="SUPFAM" id="SSF56214">
    <property type="entry name" value="4'-phosphopantetheinyl transferase"/>
    <property type="match status" value="1"/>
</dbReference>
<gene>
    <name evidence="1" type="primary">acpS</name>
    <name type="ordered locus">BCAH187_A0284</name>
</gene>
<proteinExistence type="inferred from homology"/>
<keyword id="KW-0963">Cytoplasm</keyword>
<keyword id="KW-0275">Fatty acid biosynthesis</keyword>
<keyword id="KW-0276">Fatty acid metabolism</keyword>
<keyword id="KW-0444">Lipid biosynthesis</keyword>
<keyword id="KW-0443">Lipid metabolism</keyword>
<keyword id="KW-0460">Magnesium</keyword>
<keyword id="KW-0479">Metal-binding</keyword>
<keyword id="KW-0808">Transferase</keyword>
<comment type="function">
    <text evidence="1">Transfers the 4'-phosphopantetheine moiety from coenzyme A to a Ser of acyl-carrier-protein.</text>
</comment>
<comment type="catalytic activity">
    <reaction evidence="1">
        <text>apo-[ACP] + CoA = holo-[ACP] + adenosine 3',5'-bisphosphate + H(+)</text>
        <dbReference type="Rhea" id="RHEA:12068"/>
        <dbReference type="Rhea" id="RHEA-COMP:9685"/>
        <dbReference type="Rhea" id="RHEA-COMP:9690"/>
        <dbReference type="ChEBI" id="CHEBI:15378"/>
        <dbReference type="ChEBI" id="CHEBI:29999"/>
        <dbReference type="ChEBI" id="CHEBI:57287"/>
        <dbReference type="ChEBI" id="CHEBI:58343"/>
        <dbReference type="ChEBI" id="CHEBI:64479"/>
        <dbReference type="EC" id="2.7.8.7"/>
    </reaction>
</comment>
<comment type="cofactor">
    <cofactor evidence="1">
        <name>Mg(2+)</name>
        <dbReference type="ChEBI" id="CHEBI:18420"/>
    </cofactor>
</comment>
<comment type="subcellular location">
    <subcellularLocation>
        <location evidence="1">Cytoplasm</location>
    </subcellularLocation>
</comment>
<comment type="similarity">
    <text evidence="1">Belongs to the P-Pant transferase superfamily. AcpS family.</text>
</comment>
<name>ACPS_BACC7</name>
<feature type="chain" id="PRO_1000117344" description="Holo-[acyl-carrier-protein] synthase">
    <location>
        <begin position="1"/>
        <end position="119"/>
    </location>
</feature>
<feature type="binding site" evidence="1">
    <location>
        <position position="8"/>
    </location>
    <ligand>
        <name>Mg(2+)</name>
        <dbReference type="ChEBI" id="CHEBI:18420"/>
    </ligand>
</feature>
<feature type="binding site" evidence="1">
    <location>
        <position position="58"/>
    </location>
    <ligand>
        <name>Mg(2+)</name>
        <dbReference type="ChEBI" id="CHEBI:18420"/>
    </ligand>
</feature>
<reference key="1">
    <citation type="submission" date="2008-10" db="EMBL/GenBank/DDBJ databases">
        <title>Genome sequence of Bacillus cereus AH187.</title>
        <authorList>
            <person name="Dodson R.J."/>
            <person name="Durkin A.S."/>
            <person name="Rosovitz M.J."/>
            <person name="Rasko D.A."/>
            <person name="Kolsto A.B."/>
            <person name="Okstad O.A."/>
            <person name="Ravel J."/>
            <person name="Sutton G."/>
        </authorList>
    </citation>
    <scope>NUCLEOTIDE SEQUENCE [LARGE SCALE GENOMIC DNA]</scope>
    <source>
        <strain>AH187</strain>
    </source>
</reference>
<sequence length="119" mass="13142">MIVGIGIDIIELNRIEKMIDGKLKFMERILTESERNVAKGLKGSRLTEFVAGRFAAKEAYSKAVGTGIGKEVSFLDIEVRNDDRGKPILITSTEHIVHLSISHSKEFAVAQVVLESSSR</sequence>
<protein>
    <recommendedName>
        <fullName evidence="1">Holo-[acyl-carrier-protein] synthase</fullName>
        <shortName evidence="1">Holo-ACP synthase</shortName>
        <ecNumber evidence="1">2.7.8.7</ecNumber>
    </recommendedName>
    <alternativeName>
        <fullName evidence="1">4'-phosphopantetheinyl transferase AcpS</fullName>
    </alternativeName>
</protein>
<evidence type="ECO:0000255" key="1">
    <source>
        <dbReference type="HAMAP-Rule" id="MF_00101"/>
    </source>
</evidence>